<protein>
    <recommendedName>
        <fullName>Nucleoporin NDC1</fullName>
    </recommendedName>
    <alternativeName>
        <fullName>Nuclear division cycle protein 1</fullName>
    </alternativeName>
    <alternativeName>
        <fullName>Nuclear pore protein NDC1</fullName>
    </alternativeName>
</protein>
<name>NDC1_YEAST</name>
<organism>
    <name type="scientific">Saccharomyces cerevisiae (strain ATCC 204508 / S288c)</name>
    <name type="common">Baker's yeast</name>
    <dbReference type="NCBI Taxonomy" id="559292"/>
    <lineage>
        <taxon>Eukaryota</taxon>
        <taxon>Fungi</taxon>
        <taxon>Dikarya</taxon>
        <taxon>Ascomycota</taxon>
        <taxon>Saccharomycotina</taxon>
        <taxon>Saccharomycetes</taxon>
        <taxon>Saccharomycetales</taxon>
        <taxon>Saccharomycetaceae</taxon>
        <taxon>Saccharomyces</taxon>
    </lineage>
</organism>
<feature type="chain" id="PRO_0000204862" description="Nucleoporin NDC1">
    <location>
        <begin position="1"/>
        <end position="655"/>
    </location>
</feature>
<feature type="topological domain" description="Cytoplasmic" evidence="9">
    <location>
        <begin position="1"/>
        <end position="33"/>
    </location>
</feature>
<feature type="transmembrane region" description="Helical; Name=1" evidence="1">
    <location>
        <begin position="34"/>
        <end position="54"/>
    </location>
</feature>
<feature type="topological domain" description="Perinuclear space" evidence="9">
    <location>
        <begin position="55"/>
        <end position="58"/>
    </location>
</feature>
<feature type="transmembrane region" description="Helical; Name=2" evidence="1">
    <location>
        <begin position="59"/>
        <end position="79"/>
    </location>
</feature>
<feature type="topological domain" description="Cytoplasmic" evidence="9">
    <location>
        <begin position="80"/>
        <end position="88"/>
    </location>
</feature>
<feature type="transmembrane region" description="Helical; Name=3" evidence="1">
    <location>
        <begin position="89"/>
        <end position="108"/>
    </location>
</feature>
<feature type="topological domain" description="Perinuclear space" evidence="9">
    <location>
        <position position="109"/>
    </location>
</feature>
<feature type="transmembrane region" description="Helical; Name=4" evidence="1">
    <location>
        <begin position="110"/>
        <end position="130"/>
    </location>
</feature>
<feature type="topological domain" description="Cytoplasmic" evidence="9">
    <location>
        <begin position="131"/>
        <end position="190"/>
    </location>
</feature>
<feature type="transmembrane region" description="Helical; Name=5" evidence="1">
    <location>
        <begin position="191"/>
        <end position="211"/>
    </location>
</feature>
<feature type="topological domain" description="Perinuclear space" evidence="9">
    <location>
        <begin position="212"/>
        <end position="224"/>
    </location>
</feature>
<feature type="transmembrane region" description="Helical; Name=6" evidence="1">
    <location>
        <begin position="225"/>
        <end position="245"/>
    </location>
</feature>
<feature type="topological domain" description="Cytoplasmic" evidence="6">
    <location>
        <begin position="246"/>
        <end position="655"/>
    </location>
</feature>
<feature type="modified residue" description="Phosphoserine" evidence="10">
    <location>
        <position position="401"/>
    </location>
</feature>
<feature type="modified residue" description="Phosphoserine" evidence="10">
    <location>
        <position position="412"/>
    </location>
</feature>
<accession>P32500</accession>
<accession>D6VZE3</accession>
<sequence>MIQTPRELLNPRYTYHTIFSDVCKTRFNHLVTRLFFICSIIQTVVISLLALPHSPLWELALAFIPNILALNLVSLLIIVTRKNYMHVKNFGFANSLTFILGQLLSVKFLVYQGVYSMGSILLSFVLGVVFGRGGSGWKPYYKLFIWLVVPTIYNLQHHVTDADKLSFNCENFFQAPQDYVLERVKRIMEKSVILSVISMFVLPIFTTVFFSRQKSGLFDSFTNGVLAVTNLLIISCIIFITFEFINIAFDAHMSIGCLHKGKLISNLSSTPMETLLSGLSADKPFTRLTAYQELAYRATSLDPSLRAPIYHSKFRSSSGNTWSLILNECLKTIQINNEKVVQYLRSVQDLGGSATARHKKKVENLDYMYENGKLTSANERLFGNRPSMMAPLRDNGLLDESPNRLRVRTDDSVLLNRGNKKRHRSSYYDNDLDETTQTFNGSIFTHETTFMTAMRLMLKKLKNSIMSFIFPSYAERQSSDESDNYRLLPNGSNKAQISIIDIWSISKKRQAEKLVPLPICHANSVVALTGLLIRSKTEDPKGGIIASVGDILKTLERSICALGEFADWDPESMAYTAFQTQRTAQDRVQQDSEDEDSMKDTTDMISVLYQLSTSAFMEIVLEYNVALNDVYLDADVAKLANWFLEVYASGNPNAT</sequence>
<dbReference type="EMBL" id="X70281">
    <property type="protein sequence ID" value="CAA49767.1"/>
    <property type="molecule type" value="Genomic_DNA"/>
</dbReference>
<dbReference type="EMBL" id="Z46659">
    <property type="protein sequence ID" value="CAA86624.1"/>
    <property type="molecule type" value="Genomic_DNA"/>
</dbReference>
<dbReference type="EMBL" id="BK006946">
    <property type="protein sequence ID" value="DAA09867.1"/>
    <property type="molecule type" value="Genomic_DNA"/>
</dbReference>
<dbReference type="PIR" id="A40675">
    <property type="entry name" value="A40675"/>
</dbReference>
<dbReference type="RefSeq" id="NP_013681.1">
    <property type="nucleotide sequence ID" value="NM_001182389.1"/>
</dbReference>
<dbReference type="BioGRID" id="35138">
    <property type="interactions" value="82"/>
</dbReference>
<dbReference type="ComplexPortal" id="CPX-824">
    <property type="entry name" value="Nuclear pore complex"/>
</dbReference>
<dbReference type="DIP" id="DIP-1465N"/>
<dbReference type="FunCoup" id="P32500">
    <property type="interactions" value="199"/>
</dbReference>
<dbReference type="IntAct" id="P32500">
    <property type="interactions" value="34"/>
</dbReference>
<dbReference type="MINT" id="P32500"/>
<dbReference type="STRING" id="4932.YML031W"/>
<dbReference type="TCDB" id="1.I.1.1.1">
    <property type="family name" value="the nuclear pore complex (npc) family"/>
</dbReference>
<dbReference type="iPTMnet" id="P32500"/>
<dbReference type="PaxDb" id="4932-YML031W"/>
<dbReference type="PeptideAtlas" id="P32500"/>
<dbReference type="EnsemblFungi" id="YML031W_mRNA">
    <property type="protein sequence ID" value="YML031W"/>
    <property type="gene ID" value="YML031W"/>
</dbReference>
<dbReference type="GeneID" id="854977"/>
<dbReference type="KEGG" id="sce:YML031W"/>
<dbReference type="AGR" id="SGD:S000004493"/>
<dbReference type="SGD" id="S000004493">
    <property type="gene designation" value="NDC1"/>
</dbReference>
<dbReference type="VEuPathDB" id="FungiDB:YML031W"/>
<dbReference type="eggNOG" id="ENOG502RZSR">
    <property type="taxonomic scope" value="Eukaryota"/>
</dbReference>
<dbReference type="HOGENOM" id="CLU_028040_0_0_1"/>
<dbReference type="InParanoid" id="P32500"/>
<dbReference type="OMA" id="AHMSIGC"/>
<dbReference type="OrthoDB" id="67850at2759"/>
<dbReference type="BioCyc" id="YEAST:G3O-32632-MONOMER"/>
<dbReference type="Reactome" id="R-SCE-159236">
    <property type="pathway name" value="Transport of Mature mRNA derived from an Intron-Containing Transcript"/>
</dbReference>
<dbReference type="Reactome" id="R-SCE-3371453">
    <property type="pathway name" value="Regulation of HSF1-mediated heat shock response"/>
</dbReference>
<dbReference type="Reactome" id="R-SCE-4085377">
    <property type="pathway name" value="SUMOylation of SUMOylation proteins"/>
</dbReference>
<dbReference type="Reactome" id="R-SCE-4551638">
    <property type="pathway name" value="SUMOylation of chromatin organization proteins"/>
</dbReference>
<dbReference type="Reactome" id="R-SCE-4570464">
    <property type="pathway name" value="SUMOylation of RNA binding proteins"/>
</dbReference>
<dbReference type="BioGRID-ORCS" id="854977">
    <property type="hits" value="2 hits in 10 CRISPR screens"/>
</dbReference>
<dbReference type="CD-CODE" id="876000F7">
    <property type="entry name" value="Centrosome"/>
</dbReference>
<dbReference type="PRO" id="PR:P32500"/>
<dbReference type="Proteomes" id="UP000002311">
    <property type="component" value="Chromosome XIII"/>
</dbReference>
<dbReference type="RNAct" id="P32500">
    <property type="molecule type" value="protein"/>
</dbReference>
<dbReference type="GO" id="GO:0005737">
    <property type="term" value="C:cytoplasm"/>
    <property type="evidence" value="ECO:0007669"/>
    <property type="project" value="UniProtKB-KW"/>
</dbReference>
<dbReference type="GO" id="GO:0005635">
    <property type="term" value="C:nuclear envelope"/>
    <property type="evidence" value="ECO:0000314"/>
    <property type="project" value="SGD"/>
</dbReference>
<dbReference type="GO" id="GO:0031965">
    <property type="term" value="C:nuclear membrane"/>
    <property type="evidence" value="ECO:0007669"/>
    <property type="project" value="UniProtKB-SubCell"/>
</dbReference>
<dbReference type="GO" id="GO:0005643">
    <property type="term" value="C:nuclear pore"/>
    <property type="evidence" value="ECO:0000314"/>
    <property type="project" value="SGD"/>
</dbReference>
<dbReference type="GO" id="GO:0070762">
    <property type="term" value="C:nuclear pore transmembrane ring"/>
    <property type="evidence" value="ECO:0000314"/>
    <property type="project" value="SGD"/>
</dbReference>
<dbReference type="GO" id="GO:0005816">
    <property type="term" value="C:spindle pole body"/>
    <property type="evidence" value="ECO:0000314"/>
    <property type="project" value="SGD"/>
</dbReference>
<dbReference type="GO" id="GO:0106166">
    <property type="term" value="F:spindle pole body-nuclear membrane anchor activity"/>
    <property type="evidence" value="ECO:0000318"/>
    <property type="project" value="GO_Central"/>
</dbReference>
<dbReference type="GO" id="GO:0017056">
    <property type="term" value="F:structural constituent of nuclear pore"/>
    <property type="evidence" value="ECO:0000316"/>
    <property type="project" value="SGD"/>
</dbReference>
<dbReference type="GO" id="GO:0051028">
    <property type="term" value="P:mRNA transport"/>
    <property type="evidence" value="ECO:0007669"/>
    <property type="project" value="UniProtKB-KW"/>
</dbReference>
<dbReference type="GO" id="GO:0006999">
    <property type="term" value="P:nuclear pore organization"/>
    <property type="evidence" value="ECO:0000315"/>
    <property type="project" value="SGD"/>
</dbReference>
<dbReference type="GO" id="GO:0006913">
    <property type="term" value="P:nucleocytoplasmic transport"/>
    <property type="evidence" value="ECO:0000303"/>
    <property type="project" value="ComplexPortal"/>
</dbReference>
<dbReference type="GO" id="GO:0015031">
    <property type="term" value="P:protein transport"/>
    <property type="evidence" value="ECO:0007669"/>
    <property type="project" value="UniProtKB-KW"/>
</dbReference>
<dbReference type="GO" id="GO:0030474">
    <property type="term" value="P:spindle pole body duplication"/>
    <property type="evidence" value="ECO:0000315"/>
    <property type="project" value="SGD"/>
</dbReference>
<dbReference type="GO" id="GO:0070631">
    <property type="term" value="P:spindle pole body localization"/>
    <property type="evidence" value="ECO:0000318"/>
    <property type="project" value="GO_Central"/>
</dbReference>
<dbReference type="InterPro" id="IPR019049">
    <property type="entry name" value="Nucleoporin_prot_Ndc1/Nup"/>
</dbReference>
<dbReference type="PANTHER" id="PTHR13269">
    <property type="entry name" value="NUCLEOPORIN NDC1"/>
    <property type="match status" value="1"/>
</dbReference>
<dbReference type="PANTHER" id="PTHR13269:SF6">
    <property type="entry name" value="NUCLEOPORIN NDC1"/>
    <property type="match status" value="1"/>
</dbReference>
<dbReference type="Pfam" id="PF09531">
    <property type="entry name" value="Ndc1_Nup"/>
    <property type="match status" value="1"/>
</dbReference>
<gene>
    <name type="primary">NDC1</name>
    <name type="ordered locus">YML031W</name>
</gene>
<keyword id="KW-0963">Cytoplasm</keyword>
<keyword id="KW-0206">Cytoskeleton</keyword>
<keyword id="KW-0472">Membrane</keyword>
<keyword id="KW-0509">mRNA transport</keyword>
<keyword id="KW-0906">Nuclear pore complex</keyword>
<keyword id="KW-0539">Nucleus</keyword>
<keyword id="KW-0597">Phosphoprotein</keyword>
<keyword id="KW-0653">Protein transport</keyword>
<keyword id="KW-1185">Reference proteome</keyword>
<keyword id="KW-0811">Translocation</keyword>
<keyword id="KW-0812">Transmembrane</keyword>
<keyword id="KW-1133">Transmembrane helix</keyword>
<keyword id="KW-0813">Transport</keyword>
<comment type="function">
    <text evidence="2 3 5 7">Functions as a component of the nuclear pore complex (NPC) and the spindle pole body (SPB), probably by playing a key role in de novo assembly and insertion of both structures in the nuclear envelope. In SPB duplication NDC1 is required for the insertion of the cytoplasmic side of the SPB in the nuclear envelope, thus allowing for the assembly of the nucleoplasmic SPB side. NPC components, collectively referred to as nucleoporins (NUPs), can play the role of both NPC structural components and of docking or interaction partners for transiently associated nuclear transport factors.</text>
</comment>
<comment type="subunit">
    <text evidence="2">Component of the nuclear pore complex (NPC). NPC constitutes the exclusive means of nucleocytoplasmic transport. NPCs allow the passive diffusion of ions and small molecules and the active, nuclear transport receptor-mediated bidirectional transport of macromolecules such as proteins, RNAs, ribonucleoparticles (RNPs), and ribosomal subunits across the nuclear envelope. Due to its 8-fold rotational symmetry, all subunits are present with 8 copies or multiples thereof. NDC1 may form a subcomplex with ASM4 and NUP53 at the NPC. Interactions at the SPB have not been determined.</text>
</comment>
<comment type="interaction">
    <interactant intactId="EBI-11950">
        <id>P32500</id>
    </interactant>
    <interactant intactId="EBI-3035">
        <id>Q05166</id>
        <label>ASM4</label>
    </interactant>
    <organismsDiffer>false</organismsDiffer>
    <experiments>4</experiments>
</comment>
<comment type="interaction">
    <interactant intactId="EBI-11950">
        <id>P32500</id>
    </interactant>
    <interactant intactId="EBI-11730">
        <id>P49687</id>
        <label>NUP145</label>
    </interactant>
    <organismsDiffer>false</organismsDiffer>
    <experiments>3</experiments>
</comment>
<comment type="interaction">
    <interactant intactId="EBI-11950">
        <id>P32500</id>
    </interactant>
    <interactant intactId="EBI-27321">
        <id>Q03790</id>
        <label>NUP53</label>
    </interactant>
    <organismsDiffer>false</organismsDiffer>
    <experiments>3</experiments>
</comment>
<comment type="subcellular location">
    <subcellularLocation>
        <location evidence="2">Nucleus</location>
        <location evidence="2">Nuclear pore complex</location>
    </subcellularLocation>
    <subcellularLocation>
        <location>Nucleus membrane</location>
        <topology>Multi-pass membrane protein</topology>
    </subcellularLocation>
    <subcellularLocation>
        <location>Cytoplasm</location>
        <location>Cytoskeleton</location>
        <location>Microtubule organizing center</location>
        <location>Spindle pole body</location>
    </subcellularLocation>
    <text>Central core structure of the nuclear pore complex. Spindle pole body, central plaque.</text>
</comment>
<comment type="miscellaneous">
    <text evidence="4">Present with 3030 molecules/cell in log phase SD medium.</text>
</comment>
<comment type="similarity">
    <text evidence="8">Belongs to the NDC1 family.</text>
</comment>
<proteinExistence type="evidence at protein level"/>
<evidence type="ECO:0000255" key="1"/>
<evidence type="ECO:0000269" key="2">
    <source>
    </source>
</evidence>
<evidence type="ECO:0000269" key="3">
    <source>
    </source>
</evidence>
<evidence type="ECO:0000269" key="4">
    <source>
    </source>
</evidence>
<evidence type="ECO:0000269" key="5">
    <source>
    </source>
</evidence>
<evidence type="ECO:0000269" key="6">
    <source>
    </source>
</evidence>
<evidence type="ECO:0000269" key="7">
    <source>
    </source>
</evidence>
<evidence type="ECO:0000305" key="8"/>
<evidence type="ECO:0000305" key="9">
    <source>
    </source>
</evidence>
<evidence type="ECO:0007744" key="10">
    <source>
    </source>
</evidence>
<reference key="1">
    <citation type="journal article" date="1993" name="J. Cell Biol.">
        <title>NDC1: a nuclear periphery component required for yeast spindle pole body duplication.</title>
        <authorList>
            <person name="Winey M."/>
            <person name="Hoyt M.A."/>
            <person name="Chan C."/>
            <person name="Goetsch L."/>
            <person name="Botstein D."/>
            <person name="Byers B."/>
        </authorList>
    </citation>
    <scope>NUCLEOTIDE SEQUENCE [GENOMIC DNA]</scope>
    <source>
        <strain>ATCC 204508 / S288c</strain>
    </source>
</reference>
<reference key="2">
    <citation type="journal article" date="1997" name="Nature">
        <title>The nucleotide sequence of Saccharomyces cerevisiae chromosome XIII.</title>
        <authorList>
            <person name="Bowman S."/>
            <person name="Churcher C.M."/>
            <person name="Badcock K."/>
            <person name="Brown D."/>
            <person name="Chillingworth T."/>
            <person name="Connor R."/>
            <person name="Dedman K."/>
            <person name="Devlin K."/>
            <person name="Gentles S."/>
            <person name="Hamlin N."/>
            <person name="Hunt S."/>
            <person name="Jagels K."/>
            <person name="Lye G."/>
            <person name="Moule S."/>
            <person name="Odell C."/>
            <person name="Pearson D."/>
            <person name="Rajandream M.A."/>
            <person name="Rice P."/>
            <person name="Skelton J."/>
            <person name="Walsh S.V."/>
            <person name="Whitehead S."/>
            <person name="Barrell B.G."/>
        </authorList>
    </citation>
    <scope>NUCLEOTIDE SEQUENCE [LARGE SCALE GENOMIC DNA]</scope>
    <source>
        <strain>ATCC 204508 / S288c</strain>
    </source>
</reference>
<reference key="3">
    <citation type="journal article" date="2014" name="G3 (Bethesda)">
        <title>The reference genome sequence of Saccharomyces cerevisiae: Then and now.</title>
        <authorList>
            <person name="Engel S.R."/>
            <person name="Dietrich F.S."/>
            <person name="Fisk D.G."/>
            <person name="Binkley G."/>
            <person name="Balakrishnan R."/>
            <person name="Costanzo M.C."/>
            <person name="Dwight S.S."/>
            <person name="Hitz B.C."/>
            <person name="Karra K."/>
            <person name="Nash R.S."/>
            <person name="Weng S."/>
            <person name="Wong E.D."/>
            <person name="Lloyd P."/>
            <person name="Skrzypek M.S."/>
            <person name="Miyasato S.R."/>
            <person name="Simison M."/>
            <person name="Cherry J.M."/>
        </authorList>
    </citation>
    <scope>GENOME REANNOTATION</scope>
    <source>
        <strain>ATCC 204508 / S288c</strain>
    </source>
</reference>
<reference key="4">
    <citation type="journal article" date="1998" name="J. Cell Biol.">
        <title>Saccharomyces cerevisiae Ndc1p is a shared component of nuclear pore complexes and spindle pole bodies.</title>
        <authorList>
            <person name="Chial H.J."/>
            <person name="Rout M.P."/>
            <person name="Giddings T.H. Jr."/>
            <person name="Winey M."/>
        </authorList>
    </citation>
    <scope>FUNCTION</scope>
    <scope>ROLE IN NPC AND SPB</scope>
</reference>
<reference key="5">
    <citation type="journal article" date="2000" name="J. Cell Biol.">
        <title>The yeast nuclear pore complex: composition, architecture, and transport mechanism.</title>
        <authorList>
            <person name="Rout M.P."/>
            <person name="Aitchison J.D."/>
            <person name="Suprapto A."/>
            <person name="Hjertaas K."/>
            <person name="Zhao Y."/>
            <person name="Chait B.T."/>
        </authorList>
    </citation>
    <scope>FUNCTION</scope>
    <scope>IDENTIFICATION IN THE NUCLEAR PORE COMPLEX</scope>
    <scope>SUBCELLULAR LOCATION</scope>
</reference>
<reference key="6">
    <citation type="journal article" date="2000" name="Nature">
        <title>A comprehensive analysis of protein-protein interactions in Saccharomyces cerevisiae.</title>
        <authorList>
            <person name="Uetz P."/>
            <person name="Giot L."/>
            <person name="Cagney G."/>
            <person name="Mansfield T.A."/>
            <person name="Judson R.S."/>
            <person name="Knight J.R."/>
            <person name="Lockshon D."/>
            <person name="Narayan V."/>
            <person name="Srinivasan M."/>
            <person name="Pochart P."/>
            <person name="Qureshi-Emili A."/>
            <person name="Li Y."/>
            <person name="Godwin B."/>
            <person name="Conover D."/>
            <person name="Kalbfleisch T."/>
            <person name="Vijayadamodar G."/>
            <person name="Yang M."/>
            <person name="Johnston M."/>
            <person name="Fields S."/>
            <person name="Rothberg J.M."/>
        </authorList>
    </citation>
    <scope>INTERACTION</scope>
</reference>
<reference key="7">
    <citation type="journal article" date="2001" name="J. Cell Biol.">
        <title>A link between the synthesis of nucleoporins and the biogenesis of the nuclear envelope.</title>
        <authorList>
            <person name="Marelli M."/>
            <person name="Lusk C.P."/>
            <person name="Chan H."/>
            <person name="Aitchison J.D."/>
            <person name="Wozniak R.W."/>
        </authorList>
    </citation>
    <scope>FUNCTION</scope>
    <scope>DE NOVO NPC ASSEMBLY</scope>
</reference>
<reference key="8">
    <citation type="journal article" date="2001" name="Proc. Natl. Acad. Sci. U.S.A.">
        <title>A comprehensive two-hybrid analysis to explore the yeast protein interactome.</title>
        <authorList>
            <person name="Ito T."/>
            <person name="Chiba T."/>
            <person name="Ozawa R."/>
            <person name="Yoshida M."/>
            <person name="Hattori M."/>
            <person name="Sakaki Y."/>
        </authorList>
    </citation>
    <scope>INTERACTION</scope>
</reference>
<reference key="9">
    <citation type="journal article" date="2002" name="Curr. Genet.">
        <title>Composition of the spindle pole body of Saccharomyces cerevisiae and the proteins involved in its duplication.</title>
        <authorList>
            <person name="Helfant A.H."/>
        </authorList>
    </citation>
    <scope>REVIEW</scope>
</reference>
<reference key="10">
    <citation type="journal article" date="2003" name="Dev. Cell">
        <title>Peering through the pore: nuclear pore complex structure, assembly, and function.</title>
        <authorList>
            <person name="Suntharalingam M."/>
            <person name="Wente S.R."/>
        </authorList>
    </citation>
    <scope>REVIEW</scope>
</reference>
<reference key="11">
    <citation type="journal article" date="2003" name="Nature">
        <title>Global analysis of protein expression in yeast.</title>
        <authorList>
            <person name="Ghaemmaghami S."/>
            <person name="Huh W.-K."/>
            <person name="Bower K."/>
            <person name="Howson R.W."/>
            <person name="Belle A."/>
            <person name="Dephoure N."/>
            <person name="O'Shea E.K."/>
            <person name="Weissman J.S."/>
        </authorList>
    </citation>
    <scope>LEVEL OF PROTEIN EXPRESSION [LARGE SCALE ANALYSIS]</scope>
</reference>
<reference key="12">
    <citation type="journal article" date="2004" name="Eukaryot. Cell">
        <title>A novel allele of Saccharomyces cerevisiae NDC1 reveals a potential role for the spindle pole body component Ndc1p in nuclear pore assembly.</title>
        <authorList>
            <person name="Lau C.K."/>
            <person name="Giddings T.H. Jr."/>
            <person name="Winey M."/>
        </authorList>
    </citation>
    <scope>FUNCTION</scope>
    <scope>NPC AND SPB ASSEMBLY</scope>
</reference>
<reference key="13">
    <citation type="journal article" date="2006" name="Mol. Biol. Cell">
        <title>The Saccharomyces cerevisiae spindle pole body (SPB) component Nbp1p is required for SPB membrane insertion and interacts with the integral membrane proteins Ndc1p and Mps2p.</title>
        <authorList>
            <person name="Araki Y."/>
            <person name="Lau C.K."/>
            <person name="Maekawa H."/>
            <person name="Jaspersen S.L."/>
            <person name="Giddings T.H. Jr."/>
            <person name="Schiebel E."/>
            <person name="Winey M."/>
        </authorList>
    </citation>
    <scope>INTERACTION WITH NBP1</scope>
</reference>
<reference key="14">
    <citation type="journal article" date="2006" name="Proc. Natl. Acad. Sci. U.S.A.">
        <title>A global topology map of the Saccharomyces cerevisiae membrane proteome.</title>
        <authorList>
            <person name="Kim H."/>
            <person name="Melen K."/>
            <person name="Oesterberg M."/>
            <person name="von Heijne G."/>
        </authorList>
    </citation>
    <scope>TOPOLOGY [LARGE SCALE ANALYSIS]</scope>
    <source>
        <strain>ATCC 208353 / W303-1A</strain>
    </source>
</reference>
<reference key="15">
    <citation type="journal article" date="2009" name="Science">
        <title>Global analysis of Cdk1 substrate phosphorylation sites provides insights into evolution.</title>
        <authorList>
            <person name="Holt L.J."/>
            <person name="Tuch B.B."/>
            <person name="Villen J."/>
            <person name="Johnson A.D."/>
            <person name="Gygi S.P."/>
            <person name="Morgan D.O."/>
        </authorList>
    </citation>
    <scope>PHOSPHORYLATION [LARGE SCALE ANALYSIS] AT SER-401 AND SER-412</scope>
    <scope>IDENTIFICATION BY MASS SPECTROMETRY [LARGE SCALE ANALYSIS]</scope>
</reference>